<organism>
    <name type="scientific">Rattus norvegicus</name>
    <name type="common">Rat</name>
    <dbReference type="NCBI Taxonomy" id="10116"/>
    <lineage>
        <taxon>Eukaryota</taxon>
        <taxon>Metazoa</taxon>
        <taxon>Chordata</taxon>
        <taxon>Craniata</taxon>
        <taxon>Vertebrata</taxon>
        <taxon>Euteleostomi</taxon>
        <taxon>Mammalia</taxon>
        <taxon>Eutheria</taxon>
        <taxon>Euarchontoglires</taxon>
        <taxon>Glires</taxon>
        <taxon>Rodentia</taxon>
        <taxon>Myomorpha</taxon>
        <taxon>Muroidea</taxon>
        <taxon>Muridae</taxon>
        <taxon>Murinae</taxon>
        <taxon>Rattus</taxon>
    </lineage>
</organism>
<reference key="1">
    <citation type="submission" date="1996-06" db="EMBL/GenBank/DDBJ databases">
        <title>Molecular cloning of rat G alpha 12.</title>
        <authorList>
            <person name="Mitsui H."/>
            <person name="Exton J."/>
        </authorList>
    </citation>
    <scope>NUCLEOTIDE SEQUENCE [MRNA]</scope>
    <source>
        <tissue>Brain</tissue>
    </source>
</reference>
<reference key="2">
    <citation type="journal article" date="2002" name="Curr. Biol.">
        <title>Galpha(12) and Galpha(13) interact with Ser/Thr protein phosphatase type 5 and stimulate its phosphatase activity.</title>
        <authorList>
            <person name="Yamaguchi Y."/>
            <person name="Katoh H."/>
            <person name="Mori K."/>
            <person name="Negishi M."/>
        </authorList>
    </citation>
    <scope>FUNCTION</scope>
    <scope>INTERACTION WITH PPP5C</scope>
    <scope>SUBCELLULAR LOCATION</scope>
    <scope>MUTAGENESIS OF GLN-229</scope>
</reference>
<reference key="3">
    <citation type="journal article" date="2011" name="Arterioscler. Thromb. Vasc. Biol.">
        <title>G(alpha)12/13 induction of CYR61 in association with arteriosclerotic intimal hyperplasia: effect of sphingosine-1-phosphate.</title>
        <authorList>
            <person name="Kim Y.M."/>
            <person name="Lim S.C."/>
            <person name="Han C.Y."/>
            <person name="Kay H.Y."/>
            <person name="Cho I.J."/>
            <person name="Ki S.H."/>
            <person name="Lee M.Y."/>
            <person name="Kwon H.M."/>
            <person name="Lee C.H."/>
            <person name="Kim S.G."/>
        </authorList>
    </citation>
    <scope>FUNCTION</scope>
</reference>
<sequence length="379" mass="44065">MSGVVRTLSRCLLPAEAGARERRAGAARDAEREARRRSRDIDALLARERRAVRRLVKILLLGAGESGKSTFLKQMRIIHGREFDQKALLEFRDTIFDNILKGSRVLVDARDKLGIPWQHSENEKHGMFLMAFENKAGLPVEPATFQLYVPALSALWRDSGIREAFSRRSEFQLGESVKYFLDNLDRIGQLNYFPSKQDILLARKATKGIVEHDFVIKKIPFKMVDVGGQRSQRQKWFQCFDGITSILFMVSSSEYDQVLMEDRRTNRLVESMNIFETIVNNKLFFNVSIILFLNKMDLLVEKVKSVSIKKHFPDFKGDPHRLEDVQRYLVQCFDRKRRNRGKPLFHHFTTAIDTENIRFVFHAVKDTILQENLKDIMLQ</sequence>
<proteinExistence type="evidence at protein level"/>
<protein>
    <recommendedName>
        <fullName>Guanine nucleotide-binding protein subunit alpha-12</fullName>
        <shortName>G alpha-12</shortName>
        <shortName>G-protein subunit alpha-12</shortName>
    </recommendedName>
</protein>
<evidence type="ECO:0000250" key="1">
    <source>
        <dbReference type="UniProtKB" id="P27600"/>
    </source>
</evidence>
<evidence type="ECO:0000250" key="2">
    <source>
        <dbReference type="UniProtKB" id="Q03113"/>
    </source>
</evidence>
<evidence type="ECO:0000250" key="3">
    <source>
        <dbReference type="UniProtKB" id="Q14344"/>
    </source>
</evidence>
<evidence type="ECO:0000255" key="4">
    <source>
        <dbReference type="PROSITE-ProRule" id="PRU01230"/>
    </source>
</evidence>
<evidence type="ECO:0000269" key="5">
    <source>
    </source>
</evidence>
<evidence type="ECO:0000269" key="6">
    <source>
    </source>
</evidence>
<evidence type="ECO:0000305" key="7"/>
<gene>
    <name type="primary">Gna12</name>
</gene>
<accession>Q63210</accession>
<dbReference type="EMBL" id="D85760">
    <property type="protein sequence ID" value="BAA12867.1"/>
    <property type="molecule type" value="mRNA"/>
</dbReference>
<dbReference type="RefSeq" id="NP_112296.1">
    <property type="nucleotide sequence ID" value="NM_031034.2"/>
</dbReference>
<dbReference type="SMR" id="Q63210"/>
<dbReference type="FunCoup" id="Q63210">
    <property type="interactions" value="1664"/>
</dbReference>
<dbReference type="STRING" id="10116.ENSRNOP00000001654"/>
<dbReference type="PhosphoSitePlus" id="Q63210"/>
<dbReference type="SwissPalm" id="Q63210"/>
<dbReference type="jPOST" id="Q63210"/>
<dbReference type="PaxDb" id="10116-ENSRNOP00000001654"/>
<dbReference type="Ensembl" id="ENSRNOT00000001654.8">
    <property type="protein sequence ID" value="ENSRNOP00000001654.5"/>
    <property type="gene ID" value="ENSRNOG00000001235.8"/>
</dbReference>
<dbReference type="GeneID" id="81663"/>
<dbReference type="KEGG" id="rno:81663"/>
<dbReference type="UCSC" id="RGD:71018">
    <property type="organism name" value="rat"/>
</dbReference>
<dbReference type="AGR" id="RGD:71018"/>
<dbReference type="CTD" id="2768"/>
<dbReference type="RGD" id="71018">
    <property type="gene designation" value="Gna12"/>
</dbReference>
<dbReference type="eggNOG" id="KOG0082">
    <property type="taxonomic scope" value="Eukaryota"/>
</dbReference>
<dbReference type="GeneTree" id="ENSGT00940000157636"/>
<dbReference type="HOGENOM" id="CLU_014184_3_1_1"/>
<dbReference type="InParanoid" id="Q63210"/>
<dbReference type="OMA" id="IMRRQIN"/>
<dbReference type="OrthoDB" id="5817230at2759"/>
<dbReference type="PhylomeDB" id="Q63210"/>
<dbReference type="TreeFam" id="TF300673"/>
<dbReference type="Reactome" id="R-RNO-416482">
    <property type="pathway name" value="G alpha (12/13) signalling events"/>
</dbReference>
<dbReference type="PRO" id="PR:Q63210"/>
<dbReference type="Proteomes" id="UP000002494">
    <property type="component" value="Chromosome 12"/>
</dbReference>
<dbReference type="Bgee" id="ENSRNOG00000001235">
    <property type="expression patterns" value="Expressed in heart and 19 other cell types or tissues"/>
</dbReference>
<dbReference type="ExpressionAtlas" id="Q63210">
    <property type="expression patterns" value="baseline and differential"/>
</dbReference>
<dbReference type="GO" id="GO:0031526">
    <property type="term" value="C:brush border membrane"/>
    <property type="evidence" value="ECO:0000314"/>
    <property type="project" value="RGD"/>
</dbReference>
<dbReference type="GO" id="GO:0005737">
    <property type="term" value="C:cytoplasm"/>
    <property type="evidence" value="ECO:0000266"/>
    <property type="project" value="RGD"/>
</dbReference>
<dbReference type="GO" id="GO:0005834">
    <property type="term" value="C:heterotrimeric G-protein complex"/>
    <property type="evidence" value="ECO:0000318"/>
    <property type="project" value="GO_Central"/>
</dbReference>
<dbReference type="GO" id="GO:0016328">
    <property type="term" value="C:lateral plasma membrane"/>
    <property type="evidence" value="ECO:0000266"/>
    <property type="project" value="RGD"/>
</dbReference>
<dbReference type="GO" id="GO:0043005">
    <property type="term" value="C:neuron projection"/>
    <property type="evidence" value="ECO:0000266"/>
    <property type="project" value="RGD"/>
</dbReference>
<dbReference type="GO" id="GO:0043025">
    <property type="term" value="C:neuronal cell body"/>
    <property type="evidence" value="ECO:0000266"/>
    <property type="project" value="RGD"/>
</dbReference>
<dbReference type="GO" id="GO:0031752">
    <property type="term" value="F:D5 dopamine receptor binding"/>
    <property type="evidence" value="ECO:0000353"/>
    <property type="project" value="RGD"/>
</dbReference>
<dbReference type="GO" id="GO:0003925">
    <property type="term" value="F:G protein activity"/>
    <property type="evidence" value="ECO:0000250"/>
    <property type="project" value="UniProtKB"/>
</dbReference>
<dbReference type="GO" id="GO:0031683">
    <property type="term" value="F:G-protein beta/gamma-subunit complex binding"/>
    <property type="evidence" value="ECO:0000318"/>
    <property type="project" value="GO_Central"/>
</dbReference>
<dbReference type="GO" id="GO:0005525">
    <property type="term" value="F:GTP binding"/>
    <property type="evidence" value="ECO:0007669"/>
    <property type="project" value="UniProtKB-KW"/>
</dbReference>
<dbReference type="GO" id="GO:0003924">
    <property type="term" value="F:GTPase activity"/>
    <property type="evidence" value="ECO:0000318"/>
    <property type="project" value="GO_Central"/>
</dbReference>
<dbReference type="GO" id="GO:0046872">
    <property type="term" value="F:metal ion binding"/>
    <property type="evidence" value="ECO:0007669"/>
    <property type="project" value="UniProtKB-KW"/>
</dbReference>
<dbReference type="GO" id="GO:0051721">
    <property type="term" value="F:protein phosphatase 2A binding"/>
    <property type="evidence" value="ECO:0000266"/>
    <property type="project" value="RGD"/>
</dbReference>
<dbReference type="GO" id="GO:0072542">
    <property type="term" value="F:protein phosphatase activator activity"/>
    <property type="evidence" value="ECO:0000266"/>
    <property type="project" value="RGD"/>
</dbReference>
<dbReference type="GO" id="GO:0007188">
    <property type="term" value="P:adenylate cyclase-modulating G protein-coupled receptor signaling pathway"/>
    <property type="evidence" value="ECO:0000318"/>
    <property type="project" value="GO_Central"/>
</dbReference>
<dbReference type="GO" id="GO:0030154">
    <property type="term" value="P:cell differentiation"/>
    <property type="evidence" value="ECO:0000266"/>
    <property type="project" value="RGD"/>
</dbReference>
<dbReference type="GO" id="GO:0042733">
    <property type="term" value="P:embryonic digit morphogenesis"/>
    <property type="evidence" value="ECO:0000266"/>
    <property type="project" value="RGD"/>
</dbReference>
<dbReference type="GO" id="GO:0007212">
    <property type="term" value="P:G protein-coupled dopamine receptor signaling pathway"/>
    <property type="evidence" value="ECO:0000304"/>
    <property type="project" value="RGD"/>
</dbReference>
<dbReference type="GO" id="GO:0007186">
    <property type="term" value="P:G protein-coupled receptor signaling pathway"/>
    <property type="evidence" value="ECO:0000315"/>
    <property type="project" value="MGI"/>
</dbReference>
<dbReference type="GO" id="GO:0001701">
    <property type="term" value="P:in utero embryonic development"/>
    <property type="evidence" value="ECO:0000266"/>
    <property type="project" value="RGD"/>
</dbReference>
<dbReference type="GO" id="GO:0035556">
    <property type="term" value="P:intracellular signal transduction"/>
    <property type="evidence" value="ECO:0000266"/>
    <property type="project" value="RGD"/>
</dbReference>
<dbReference type="GO" id="GO:1904753">
    <property type="term" value="P:negative regulation of vascular associated smooth muscle cell migration"/>
    <property type="evidence" value="ECO:0000315"/>
    <property type="project" value="MGI"/>
</dbReference>
<dbReference type="GO" id="GO:1904706">
    <property type="term" value="P:negative regulation of vascular associated smooth muscle cell proliferation"/>
    <property type="evidence" value="ECO:0000315"/>
    <property type="project" value="MGI"/>
</dbReference>
<dbReference type="GO" id="GO:0008217">
    <property type="term" value="P:regulation of blood pressure"/>
    <property type="evidence" value="ECO:0000266"/>
    <property type="project" value="RGD"/>
</dbReference>
<dbReference type="GO" id="GO:0008360">
    <property type="term" value="P:regulation of cell shape"/>
    <property type="evidence" value="ECO:0000266"/>
    <property type="project" value="RGD"/>
</dbReference>
<dbReference type="GO" id="GO:0010762">
    <property type="term" value="P:regulation of fibroblast migration"/>
    <property type="evidence" value="ECO:0000250"/>
    <property type="project" value="UniProtKB"/>
</dbReference>
<dbReference type="GO" id="GO:0032434">
    <property type="term" value="P:regulation of proteasomal ubiquitin-dependent protein catabolic process"/>
    <property type="evidence" value="ECO:0000250"/>
    <property type="project" value="UniProtKB"/>
</dbReference>
<dbReference type="GO" id="GO:0032006">
    <property type="term" value="P:regulation of TOR signaling"/>
    <property type="evidence" value="ECO:0000250"/>
    <property type="project" value="UniProtKB"/>
</dbReference>
<dbReference type="GO" id="GO:0009410">
    <property type="term" value="P:response to xenobiotic stimulus"/>
    <property type="evidence" value="ECO:0000270"/>
    <property type="project" value="RGD"/>
</dbReference>
<dbReference type="GO" id="GO:0007266">
    <property type="term" value="P:Rho protein signal transduction"/>
    <property type="evidence" value="ECO:0000266"/>
    <property type="project" value="RGD"/>
</dbReference>
<dbReference type="GO" id="GO:0160221">
    <property type="term" value="P:Rho-activating G protein-coupled receptor signaling pathway"/>
    <property type="evidence" value="ECO:0000250"/>
    <property type="project" value="UniProtKB"/>
</dbReference>
<dbReference type="CDD" id="cd00066">
    <property type="entry name" value="G-alpha"/>
    <property type="match status" value="1"/>
</dbReference>
<dbReference type="FunFam" id="3.40.50.300:FF:000692">
    <property type="entry name" value="Guanine nucleotide-binding protein subunit alpha"/>
    <property type="match status" value="1"/>
</dbReference>
<dbReference type="FunFam" id="1.10.400.10:FF:000004">
    <property type="entry name" value="Guanine nucleotide-binding protein subunit alpha-12"/>
    <property type="match status" value="1"/>
</dbReference>
<dbReference type="FunFam" id="3.40.50.300:FF:000754">
    <property type="entry name" value="Guanine nucleotide-binding protein subunit alpha-13"/>
    <property type="match status" value="1"/>
</dbReference>
<dbReference type="Gene3D" id="1.10.400.10">
    <property type="entry name" value="GI Alpha 1, domain 2-like"/>
    <property type="match status" value="1"/>
</dbReference>
<dbReference type="Gene3D" id="3.40.50.300">
    <property type="entry name" value="P-loop containing nucleotide triphosphate hydrolases"/>
    <property type="match status" value="1"/>
</dbReference>
<dbReference type="InterPro" id="IPR000469">
    <property type="entry name" value="Gprotein_alpha_12/13"/>
</dbReference>
<dbReference type="InterPro" id="IPR001019">
    <property type="entry name" value="Gprotein_alpha_su"/>
</dbReference>
<dbReference type="InterPro" id="IPR011025">
    <property type="entry name" value="GproteinA_insert"/>
</dbReference>
<dbReference type="InterPro" id="IPR027417">
    <property type="entry name" value="P-loop_NTPase"/>
</dbReference>
<dbReference type="PANTHER" id="PTHR10218">
    <property type="entry name" value="GTP-BINDING PROTEIN ALPHA SUBUNIT"/>
    <property type="match status" value="1"/>
</dbReference>
<dbReference type="PANTHER" id="PTHR10218:SF130">
    <property type="entry name" value="GUANINE NUCLEOTIDE-BINDING PROTEIN SUBUNIT ALPHA-12"/>
    <property type="match status" value="1"/>
</dbReference>
<dbReference type="Pfam" id="PF00503">
    <property type="entry name" value="G-alpha"/>
    <property type="match status" value="1"/>
</dbReference>
<dbReference type="PRINTS" id="PR00318">
    <property type="entry name" value="GPROTEINA"/>
</dbReference>
<dbReference type="PRINTS" id="PR00440">
    <property type="entry name" value="GPROTEINA12"/>
</dbReference>
<dbReference type="SMART" id="SM00275">
    <property type="entry name" value="G_alpha"/>
    <property type="match status" value="1"/>
</dbReference>
<dbReference type="SUPFAM" id="SSF52540">
    <property type="entry name" value="P-loop containing nucleoside triphosphate hydrolases"/>
    <property type="match status" value="1"/>
</dbReference>
<dbReference type="SUPFAM" id="SSF47895">
    <property type="entry name" value="Transducin (alpha subunit), insertion domain"/>
    <property type="match status" value="1"/>
</dbReference>
<dbReference type="PROSITE" id="PS51882">
    <property type="entry name" value="G_ALPHA"/>
    <property type="match status" value="1"/>
</dbReference>
<name>GNA12_RAT</name>
<keyword id="KW-1003">Cell membrane</keyword>
<keyword id="KW-0963">Cytoplasm</keyword>
<keyword id="KW-0342">GTP-binding</keyword>
<keyword id="KW-0449">Lipoprotein</keyword>
<keyword id="KW-0460">Magnesium</keyword>
<keyword id="KW-0472">Membrane</keyword>
<keyword id="KW-0479">Metal-binding</keyword>
<keyword id="KW-0547">Nucleotide-binding</keyword>
<keyword id="KW-0564">Palmitate</keyword>
<keyword id="KW-0597">Phosphoprotein</keyword>
<keyword id="KW-1185">Reference proteome</keyword>
<keyword id="KW-0807">Transducer</keyword>
<comment type="function">
    <text evidence="1 2 5 6">Guanine nucleotide-binding proteins (G proteins) are involved as modulators or transducers in various transmembrane signaling systems (PubMed:12176367, PubMed:21212405). Activates effector molecule RhoA by binding and activating RhoGEFs (ARHGEF12/LARG) (By similarity). GNA12-dependent Rho signaling subsequently regulates transcription factor AP-1 (activating protein-1) (PubMed:21212405). GNA12-dependent Rho signaling also regulates protein phosphatese 2A activation causing dephosphorylation of its target proteins (By similarity). Promotes tumor cell invasion and metastasis by activating RhoA/ROCK signaling pathway and up-regulating pro-inflammatory cytokine production. Inhibits CDH1-mediated cell adhesion in process independent from Rho activation (By similarity). Together with NAPA promotes CDH5 localization to plasma membrane (By similarity). May play a role in the control of cell migration through the TOR signaling cascade (PubMed:12176367).</text>
</comment>
<comment type="subunit">
    <text evidence="1 2">G proteins are composed of 3 units; alpha, beta and gamma. The alpha chain contains the guanine nucleotide binding site. Interacts with UBXD5. Interacts (in GTP-bound form) with PPP5C (via TPR repeats); activates PPP5C phosphatase activity and translocates PPP5C to the cell membrane. Interacts with RGS22. Interacts (via N-terminus) with NAPA; the interaction promotes CDH5 localization to plasma membrane. Interacts with CTNND1 (via N-terminus); the interaction regulates CDH1-mediated cell-cell adhesion. Interacts with PPP2R1A; the interaction promotes protein phosphatase 2A activation causing dephosphorylation of MAPT. Interacts (in GTP-bound form) with ARHGEF1. Interacts (in GTP-bound form) with ARHGEF11 (via RGS domain). Interacts (in GTP-bound form) with ARHGEF12 (via RGS domain).</text>
</comment>
<comment type="subcellular location">
    <subcellularLocation>
        <location evidence="5">Cell membrane</location>
        <topology evidence="5">Lipid-anchor</topology>
    </subcellularLocation>
    <subcellularLocation>
        <location evidence="2">Lateral cell membrane</location>
        <topology evidence="5">Lipid-anchor</topology>
    </subcellularLocation>
    <subcellularLocation>
        <location evidence="2">Cytoplasm</location>
    </subcellularLocation>
    <text evidence="2">CDH1 enhances cell membrane localization.</text>
</comment>
<comment type="similarity">
    <text evidence="7">Belongs to the G-alpha family. G(12) subfamily.</text>
</comment>
<feature type="chain" id="PRO_0000203772" description="Guanine nucleotide-binding protein subunit alpha-12">
    <location>
        <begin position="1"/>
        <end position="379"/>
    </location>
</feature>
<feature type="domain" description="G-alpha" evidence="4">
    <location>
        <begin position="54"/>
        <end position="379"/>
    </location>
</feature>
<feature type="region of interest" description="G1 motif" evidence="4">
    <location>
        <begin position="57"/>
        <end position="70"/>
    </location>
</feature>
<feature type="region of interest" description="G2 motif" evidence="4">
    <location>
        <begin position="198"/>
        <end position="206"/>
    </location>
</feature>
<feature type="region of interest" description="G3 motif" evidence="4">
    <location>
        <begin position="221"/>
        <end position="230"/>
    </location>
</feature>
<feature type="region of interest" description="G4 motif" evidence="4">
    <location>
        <begin position="290"/>
        <end position="297"/>
    </location>
</feature>
<feature type="region of interest" description="G5 motif" evidence="4">
    <location>
        <begin position="349"/>
        <end position="354"/>
    </location>
</feature>
<feature type="binding site" evidence="1">
    <location>
        <begin position="65"/>
        <end position="70"/>
    </location>
    <ligand>
        <name>GTP</name>
        <dbReference type="ChEBI" id="CHEBI:37565"/>
    </ligand>
</feature>
<feature type="binding site" evidence="1">
    <location>
        <position position="69"/>
    </location>
    <ligand>
        <name>Mg(2+)</name>
        <dbReference type="ChEBI" id="CHEBI:18420"/>
    </ligand>
</feature>
<feature type="binding site" evidence="1">
    <location>
        <begin position="200"/>
        <end position="203"/>
    </location>
    <ligand>
        <name>GTP</name>
        <dbReference type="ChEBI" id="CHEBI:37565"/>
    </ligand>
</feature>
<feature type="binding site" evidence="1">
    <location>
        <position position="206"/>
    </location>
    <ligand>
        <name>Mg(2+)</name>
        <dbReference type="ChEBI" id="CHEBI:18420"/>
    </ligand>
</feature>
<feature type="binding site" evidence="1">
    <location>
        <begin position="294"/>
        <end position="297"/>
    </location>
    <ligand>
        <name>GTP</name>
        <dbReference type="ChEBI" id="CHEBI:37565"/>
    </ligand>
</feature>
<feature type="binding site" evidence="1">
    <location>
        <position position="351"/>
    </location>
    <ligand>
        <name>GTP</name>
        <dbReference type="ChEBI" id="CHEBI:37565"/>
    </ligand>
</feature>
<feature type="modified residue" description="Phosphothreonine" evidence="3">
    <location>
        <position position="206"/>
    </location>
</feature>
<feature type="lipid moiety-binding region" description="S-palmitoyl cysteine" evidence="1">
    <location>
        <position position="11"/>
    </location>
</feature>
<feature type="mutagenesis site" description="Constitutively active. Interacts with PPP5C, activates its phosphatase activity and translocates PPP5C to the plasma membrane." evidence="5">
    <original>Q</original>
    <variation>L</variation>
    <location>
        <position position="229"/>
    </location>
</feature>